<evidence type="ECO:0000255" key="1">
    <source>
        <dbReference type="HAMAP-Rule" id="MF_00539"/>
    </source>
</evidence>
<evidence type="ECO:0000256" key="2">
    <source>
        <dbReference type="SAM" id="MobiDB-lite"/>
    </source>
</evidence>
<evidence type="ECO:0000305" key="3"/>
<dbReference type="EMBL" id="AM406670">
    <property type="protein sequence ID" value="CAL95785.1"/>
    <property type="molecule type" value="Genomic_DNA"/>
</dbReference>
<dbReference type="RefSeq" id="WP_011766893.1">
    <property type="nucleotide sequence ID" value="NC_008702.1"/>
</dbReference>
<dbReference type="SMR" id="A1KAC9"/>
<dbReference type="STRING" id="62928.azo3168"/>
<dbReference type="KEGG" id="aoa:dqs_3300"/>
<dbReference type="KEGG" id="azo:azo3168"/>
<dbReference type="eggNOG" id="COG0211">
    <property type="taxonomic scope" value="Bacteria"/>
</dbReference>
<dbReference type="HOGENOM" id="CLU_095424_4_1_4"/>
<dbReference type="OrthoDB" id="9803474at2"/>
<dbReference type="Proteomes" id="UP000002588">
    <property type="component" value="Chromosome"/>
</dbReference>
<dbReference type="GO" id="GO:0022625">
    <property type="term" value="C:cytosolic large ribosomal subunit"/>
    <property type="evidence" value="ECO:0007669"/>
    <property type="project" value="TreeGrafter"/>
</dbReference>
<dbReference type="GO" id="GO:0003735">
    <property type="term" value="F:structural constituent of ribosome"/>
    <property type="evidence" value="ECO:0007669"/>
    <property type="project" value="InterPro"/>
</dbReference>
<dbReference type="GO" id="GO:0006412">
    <property type="term" value="P:translation"/>
    <property type="evidence" value="ECO:0007669"/>
    <property type="project" value="UniProtKB-UniRule"/>
</dbReference>
<dbReference type="FunFam" id="2.40.50.100:FF:000001">
    <property type="entry name" value="50S ribosomal protein L27"/>
    <property type="match status" value="1"/>
</dbReference>
<dbReference type="Gene3D" id="2.40.50.100">
    <property type="match status" value="1"/>
</dbReference>
<dbReference type="HAMAP" id="MF_00539">
    <property type="entry name" value="Ribosomal_bL27"/>
    <property type="match status" value="1"/>
</dbReference>
<dbReference type="InterPro" id="IPR001684">
    <property type="entry name" value="Ribosomal_bL27"/>
</dbReference>
<dbReference type="InterPro" id="IPR018261">
    <property type="entry name" value="Ribosomal_bL27_CS"/>
</dbReference>
<dbReference type="NCBIfam" id="TIGR00062">
    <property type="entry name" value="L27"/>
    <property type="match status" value="1"/>
</dbReference>
<dbReference type="PANTHER" id="PTHR15893:SF0">
    <property type="entry name" value="LARGE RIBOSOMAL SUBUNIT PROTEIN BL27M"/>
    <property type="match status" value="1"/>
</dbReference>
<dbReference type="PANTHER" id="PTHR15893">
    <property type="entry name" value="RIBOSOMAL PROTEIN L27"/>
    <property type="match status" value="1"/>
</dbReference>
<dbReference type="Pfam" id="PF01016">
    <property type="entry name" value="Ribosomal_L27"/>
    <property type="match status" value="1"/>
</dbReference>
<dbReference type="PRINTS" id="PR00063">
    <property type="entry name" value="RIBOSOMALL27"/>
</dbReference>
<dbReference type="SUPFAM" id="SSF110324">
    <property type="entry name" value="Ribosomal L27 protein-like"/>
    <property type="match status" value="1"/>
</dbReference>
<dbReference type="PROSITE" id="PS00831">
    <property type="entry name" value="RIBOSOMAL_L27"/>
    <property type="match status" value="1"/>
</dbReference>
<keyword id="KW-1185">Reference proteome</keyword>
<keyword id="KW-0687">Ribonucleoprotein</keyword>
<keyword id="KW-0689">Ribosomal protein</keyword>
<name>RL27_AZOSB</name>
<comment type="similarity">
    <text evidence="1">Belongs to the bacterial ribosomal protein bL27 family.</text>
</comment>
<sequence length="91" mass="9705">MAHKKAGGSSRNGRDSESKRLGVKRYGGQFVLAGNIIVRQRGTEYHPGENVGIGKDHTLFALKDGTVKFLVKGAAKRRTVVIEAAQEAAAA</sequence>
<proteinExistence type="inferred from homology"/>
<organism>
    <name type="scientific">Azoarcus sp. (strain BH72)</name>
    <dbReference type="NCBI Taxonomy" id="418699"/>
    <lineage>
        <taxon>Bacteria</taxon>
        <taxon>Pseudomonadati</taxon>
        <taxon>Pseudomonadota</taxon>
        <taxon>Betaproteobacteria</taxon>
        <taxon>Rhodocyclales</taxon>
        <taxon>Zoogloeaceae</taxon>
        <taxon>Azoarcus</taxon>
    </lineage>
</organism>
<accession>A1KAC9</accession>
<gene>
    <name evidence="1" type="primary">rpmA</name>
    <name type="ordered locus">azo3168</name>
</gene>
<protein>
    <recommendedName>
        <fullName evidence="1">Large ribosomal subunit protein bL27</fullName>
    </recommendedName>
    <alternativeName>
        <fullName evidence="3">50S ribosomal protein L27</fullName>
    </alternativeName>
</protein>
<reference key="1">
    <citation type="journal article" date="2006" name="Nat. Biotechnol.">
        <title>Complete genome of the mutualistic, N2-fixing grass endophyte Azoarcus sp. strain BH72.</title>
        <authorList>
            <person name="Krause A."/>
            <person name="Ramakumar A."/>
            <person name="Bartels D."/>
            <person name="Battistoni F."/>
            <person name="Bekel T."/>
            <person name="Boch J."/>
            <person name="Boehm M."/>
            <person name="Friedrich F."/>
            <person name="Hurek T."/>
            <person name="Krause L."/>
            <person name="Linke B."/>
            <person name="McHardy A.C."/>
            <person name="Sarkar A."/>
            <person name="Schneiker S."/>
            <person name="Syed A.A."/>
            <person name="Thauer R."/>
            <person name="Vorhoelter F.-J."/>
            <person name="Weidner S."/>
            <person name="Puehler A."/>
            <person name="Reinhold-Hurek B."/>
            <person name="Kaiser O."/>
            <person name="Goesmann A."/>
        </authorList>
    </citation>
    <scope>NUCLEOTIDE SEQUENCE [LARGE SCALE GENOMIC DNA]</scope>
    <source>
        <strain>BH72</strain>
    </source>
</reference>
<feature type="chain" id="PRO_1000017410" description="Large ribosomal subunit protein bL27">
    <location>
        <begin position="1"/>
        <end position="91"/>
    </location>
</feature>
<feature type="region of interest" description="Disordered" evidence="2">
    <location>
        <begin position="1"/>
        <end position="21"/>
    </location>
</feature>